<comment type="function">
    <text evidence="1">Bifunctional regulator of neuronal activity in the mushroom body, and possibly other regions of the brain, that acts as a signaling molecule required for homeostatic regulation of sleep under normal conditions and after sleep deprivation. Reduces neuronal excitability by enhancing Sh/shaker K(+) channel activity; possibly by stabilizing Sh/shaker to increase protein levels, accelerating its activation kinetics, slowing C-type inactivation and enhancing recovery from inactivation. Specifically affects the A-type K(+) current. Antagonizes nicotinic acetylcholine receptors (nAChRs) to reduce synaptic transmission, possibly by preventing their localization to the cell surface. Required for regulation of neuromuscular excitability and plasticity at neuromuscular junctions.</text>
</comment>
<comment type="subunit">
    <text evidence="1">Interacts (via loop 2 of the three-fingered Ly-6 domain) with Sh/shaker; this interaction may stabilize both components of the complex and may be required for targeting or retention of Sh/shaker to neural cell projections. Interacts (via loop 2 of the three-fingered Ly-6 domain) with nAChRalpha3 and potentially other nicotinic acetylcholine receptors; this interaction is required for antagonism of nicotinic acetylcholine receptors.</text>
</comment>
<comment type="subcellular location">
    <subcellularLocation>
        <location evidence="1">Cell membrane</location>
        <topology evidence="1">Lipid-anchor</topology>
        <topology evidence="1">GPI-anchor</topology>
        <orientation evidence="1">Extracellular side</orientation>
    </subcellularLocation>
    <subcellularLocation>
        <location evidence="1">Membrane raft</location>
        <topology evidence="1">Lipid-anchor</topology>
        <topology evidence="1">GPI-anchor</topology>
        <orientation evidence="1">Extracellular side</orientation>
    </subcellularLocation>
</comment>
<comment type="tissue specificity">
    <text evidence="1">Expressed in mushroom body (at protein level); overlaps with expression of Sh/shaker and nicotinic acetylcholine receptor (nAChR) components also involved in sleep regulation. Expressed in the adult brain and head. Enriched in the mushroom body, anterior optic tubercle, superior protocerebrum, antennal nerve and visual projection neuron fibers projecting into the lobula plate of the optic lobe.</text>
</comment>
<comment type="domain">
    <text evidence="1">Consists of a single Ly-6 domain, adopting a three finger fold stabilized by 5 disulfide bonds. The first loop contains a region essential for protein folding or that is required for localization to the cell surface. The second loop mediates protein-protein interactions.</text>
</comment>
<comment type="PTM">
    <text evidence="1">N-glycosylated probably on Asn-57.</text>
</comment>
<comment type="similarity">
    <text evidence="4">Belongs to the quiver family.</text>
</comment>
<comment type="sequence caution" evidence="4">
    <conflict type="erroneous gene model prediction">
        <sequence resource="EMBL-CDS" id="EDW47419"/>
    </conflict>
</comment>
<protein>
    <recommendedName>
        <fullName evidence="1">UPAR/Ly6 domain-containing protein qvr</fullName>
    </recommendedName>
    <alternativeName>
        <fullName evidence="1">Protein quiver</fullName>
    </alternativeName>
    <alternativeName>
        <fullName evidence="1">Protein sleepless</fullName>
    </alternativeName>
</protein>
<reference evidence="5" key="1">
    <citation type="journal article" date="2007" name="Nature">
        <title>Evolution of genes and genomes on the Drosophila phylogeny.</title>
        <authorList>
            <consortium name="Drosophila 12 genomes consortium"/>
        </authorList>
    </citation>
    <scope>NUCLEOTIDE SEQUENCE [LARGE SCALE GENOMIC DNA]</scope>
    <source>
        <strain evidence="5">Rob3c / Tucson 14021-0248.25</strain>
    </source>
</reference>
<evidence type="ECO:0000250" key="1">
    <source>
        <dbReference type="UniProtKB" id="B5A5T4"/>
    </source>
</evidence>
<evidence type="ECO:0000255" key="2"/>
<evidence type="ECO:0000255" key="3">
    <source>
        <dbReference type="PROSITE-ProRule" id="PRU00498"/>
    </source>
</evidence>
<evidence type="ECO:0000305" key="4"/>
<evidence type="ECO:0000312" key="5">
    <source>
        <dbReference type="EMBL" id="EDW47419.1"/>
    </source>
</evidence>
<name>QVR_DROSE</name>
<accession>B4HNI3</accession>
<organism>
    <name type="scientific">Drosophila sechellia</name>
    <name type="common">Fruit fly</name>
    <dbReference type="NCBI Taxonomy" id="7238"/>
    <lineage>
        <taxon>Eukaryota</taxon>
        <taxon>Metazoa</taxon>
        <taxon>Ecdysozoa</taxon>
        <taxon>Arthropoda</taxon>
        <taxon>Hexapoda</taxon>
        <taxon>Insecta</taxon>
        <taxon>Pterygota</taxon>
        <taxon>Neoptera</taxon>
        <taxon>Endopterygota</taxon>
        <taxon>Diptera</taxon>
        <taxon>Brachycera</taxon>
        <taxon>Muscomorpha</taxon>
        <taxon>Ephydroidea</taxon>
        <taxon>Drosophilidae</taxon>
        <taxon>Drosophila</taxon>
        <taxon>Sophophora</taxon>
    </lineage>
</organism>
<proteinExistence type="inferred from homology"/>
<sequence>MWTQRNAVGNWLLVLTAVIGFITFIWIPQTSAECQTRSIYCYECDSWTDARCKDPFNYTALPRDQPPLMTCNGCCVKMVRHQRSPYEVVRRMCTSQLQINLFMVDHVCMMESSGNGHMCFCEEDMCNSSKNLHTNGCQLHLIPIAVAVSWLMGQLLSR</sequence>
<keyword id="KW-0090">Biological rhythms</keyword>
<keyword id="KW-1003">Cell membrane</keyword>
<keyword id="KW-1015">Disulfide bond</keyword>
<keyword id="KW-0325">Glycoprotein</keyword>
<keyword id="KW-0336">GPI-anchor</keyword>
<keyword id="KW-0449">Lipoprotein</keyword>
<keyword id="KW-0472">Membrane</keyword>
<keyword id="KW-1185">Reference proteome</keyword>
<keyword id="KW-0732">Signal</keyword>
<keyword id="KW-0812">Transmembrane</keyword>
<keyword id="KW-1133">Transmembrane helix</keyword>
<dbReference type="EMBL" id="CH480816">
    <property type="protein sequence ID" value="EDW47419.1"/>
    <property type="status" value="ALT_SEQ"/>
    <property type="molecule type" value="Genomic_DNA"/>
</dbReference>
<dbReference type="RefSeq" id="XP_002033406.1">
    <property type="nucleotide sequence ID" value="XM_002033370.1"/>
</dbReference>
<dbReference type="STRING" id="7238.B4HNI3"/>
<dbReference type="GlyCosmos" id="B4HNI3">
    <property type="glycosylation" value="1 site, No reported glycans"/>
</dbReference>
<dbReference type="EnsemblMetazoa" id="XM_032714983.1">
    <property type="protein sequence ID" value="XP_032570874.1"/>
    <property type="gene ID" value="LOC6608677"/>
</dbReference>
<dbReference type="ChiTaRS" id="qvr">
    <property type="organism name" value="fly"/>
</dbReference>
<dbReference type="Proteomes" id="UP000001292">
    <property type="component" value="Unassembled WGS sequence"/>
</dbReference>
<dbReference type="GO" id="GO:0009897">
    <property type="term" value="C:external side of plasma membrane"/>
    <property type="evidence" value="ECO:0007669"/>
    <property type="project" value="EnsemblMetazoa"/>
</dbReference>
<dbReference type="GO" id="GO:0045121">
    <property type="term" value="C:membrane raft"/>
    <property type="evidence" value="ECO:0007669"/>
    <property type="project" value="UniProtKB-SubCell"/>
</dbReference>
<dbReference type="GO" id="GO:0005886">
    <property type="term" value="C:plasma membrane"/>
    <property type="evidence" value="ECO:0000250"/>
    <property type="project" value="UniProtKB"/>
</dbReference>
<dbReference type="GO" id="GO:0030550">
    <property type="term" value="F:acetylcholine receptor inhibitor activity"/>
    <property type="evidence" value="ECO:0007669"/>
    <property type="project" value="EnsemblMetazoa"/>
</dbReference>
<dbReference type="GO" id="GO:0034235">
    <property type="term" value="F:GPI anchor binding"/>
    <property type="evidence" value="ECO:0000250"/>
    <property type="project" value="UniProtKB"/>
</dbReference>
<dbReference type="GO" id="GO:0099104">
    <property type="term" value="F:potassium channel activator activity"/>
    <property type="evidence" value="ECO:0007669"/>
    <property type="project" value="EnsemblMetazoa"/>
</dbReference>
<dbReference type="GO" id="GO:0045837">
    <property type="term" value="P:negative regulation of membrane potential"/>
    <property type="evidence" value="ECO:0007669"/>
    <property type="project" value="EnsemblMetazoa"/>
</dbReference>
<dbReference type="GO" id="GO:0045938">
    <property type="term" value="P:positive regulation of circadian sleep/wake cycle, sleep"/>
    <property type="evidence" value="ECO:0007669"/>
    <property type="project" value="EnsemblMetazoa"/>
</dbReference>
<dbReference type="GO" id="GO:0045187">
    <property type="term" value="P:regulation of circadian sleep/wake cycle, sleep"/>
    <property type="evidence" value="ECO:0000250"/>
    <property type="project" value="UniProtKB"/>
</dbReference>
<dbReference type="GO" id="GO:0032222">
    <property type="term" value="P:regulation of synaptic transmission, cholinergic"/>
    <property type="evidence" value="ECO:0007669"/>
    <property type="project" value="EnsemblMetazoa"/>
</dbReference>
<dbReference type="GO" id="GO:0048511">
    <property type="term" value="P:rhythmic process"/>
    <property type="evidence" value="ECO:0007669"/>
    <property type="project" value="UniProtKB-KW"/>
</dbReference>
<dbReference type="GO" id="GO:0030431">
    <property type="term" value="P:sleep"/>
    <property type="evidence" value="ECO:0007669"/>
    <property type="project" value="EnsemblMetazoa"/>
</dbReference>
<dbReference type="CDD" id="cd23595">
    <property type="entry name" value="TFP_LU_ECD_Qvr"/>
    <property type="match status" value="1"/>
</dbReference>
<dbReference type="InterPro" id="IPR031424">
    <property type="entry name" value="QVR-like"/>
</dbReference>
<dbReference type="InterPro" id="IPR050975">
    <property type="entry name" value="Sleep_regulator"/>
</dbReference>
<dbReference type="PANTHER" id="PTHR33562">
    <property type="entry name" value="ATILLA, ISOFORM B-RELATED-RELATED"/>
    <property type="match status" value="1"/>
</dbReference>
<dbReference type="PANTHER" id="PTHR33562:SF31">
    <property type="entry name" value="PROTEIN QUIVER"/>
    <property type="match status" value="1"/>
</dbReference>
<dbReference type="Pfam" id="PF17064">
    <property type="entry name" value="QVR"/>
    <property type="match status" value="1"/>
</dbReference>
<feature type="signal peptide" evidence="2">
    <location>
        <begin position="1"/>
        <end position="32"/>
    </location>
</feature>
<feature type="chain" id="PRO_0000365468" description="UPAR/Ly6 domain-containing protein qvr" evidence="2">
    <location>
        <begin position="33"/>
        <end position="127"/>
    </location>
</feature>
<feature type="propeptide" id="PRO_0000365469" description="Removed in mature form" evidence="1">
    <location>
        <begin position="128"/>
        <end position="158"/>
    </location>
</feature>
<feature type="transmembrane region" description="Helical" evidence="2">
    <location>
        <begin position="136"/>
        <end position="156"/>
    </location>
</feature>
<feature type="region of interest" description="Loop 1; may be required for cell surface localization or be essential for protein folding" evidence="1">
    <location>
        <begin position="54"/>
        <end position="67"/>
    </location>
</feature>
<feature type="region of interest" description="Loop 2; required for interaction with Sh/shaker and nAChRalpha3/Nicotinic acetylcholine receptor alpha3" evidence="1">
    <location>
        <begin position="77"/>
        <end position="91"/>
    </location>
</feature>
<feature type="lipid moiety-binding region" description="GPI-anchor amidated asparagine" evidence="1">
    <location>
        <position position="127"/>
    </location>
</feature>
<feature type="glycosylation site" description="N-linked (GlcNAc...) asparagine" evidence="1 3">
    <location>
        <position position="57"/>
    </location>
</feature>
<feature type="disulfide bond" evidence="1">
    <location>
        <begin position="41"/>
        <end position="75"/>
    </location>
</feature>
<feature type="disulfide bond" evidence="1">
    <location>
        <begin position="44"/>
        <end position="52"/>
    </location>
</feature>
<feature type="disulfide bond" evidence="1">
    <location>
        <begin position="71"/>
        <end position="93"/>
    </location>
</feature>
<feature type="disulfide bond" evidence="1">
    <location>
        <begin position="108"/>
        <end position="119"/>
    </location>
</feature>
<feature type="disulfide bond" evidence="1">
    <location>
        <begin position="121"/>
        <end position="126"/>
    </location>
</feature>
<gene>
    <name evidence="1" type="primary">qvr</name>
    <name evidence="1" type="synonym">sss</name>
    <name type="ORF">GM21292</name>
</gene>